<evidence type="ECO:0000255" key="1">
    <source>
        <dbReference type="HAMAP-Rule" id="MF_02126"/>
    </source>
</evidence>
<feature type="chain" id="PRO_0000414510" description="Release factor glutamine methyltransferase">
    <location>
        <begin position="1"/>
        <end position="294"/>
    </location>
</feature>
<feature type="binding site" evidence="1">
    <location>
        <begin position="131"/>
        <end position="135"/>
    </location>
    <ligand>
        <name>S-adenosyl-L-methionine</name>
        <dbReference type="ChEBI" id="CHEBI:59789"/>
    </ligand>
</feature>
<feature type="binding site" evidence="1">
    <location>
        <position position="154"/>
    </location>
    <ligand>
        <name>S-adenosyl-L-methionine</name>
        <dbReference type="ChEBI" id="CHEBI:59789"/>
    </ligand>
</feature>
<feature type="binding site" evidence="1">
    <location>
        <begin position="202"/>
        <end position="205"/>
    </location>
    <ligand>
        <name>substrate</name>
    </ligand>
</feature>
<feature type="binding site" evidence="1">
    <location>
        <position position="202"/>
    </location>
    <ligand>
        <name>S-adenosyl-L-methionine</name>
        <dbReference type="ChEBI" id="CHEBI:59789"/>
    </ligand>
</feature>
<name>PRMC_CHLTE</name>
<comment type="function">
    <text evidence="1">Methylates the class 1 translation termination release factors RF1/PrfA and RF2/PrfB on the glutamine residue of the universally conserved GGQ motif.</text>
</comment>
<comment type="catalytic activity">
    <reaction evidence="1">
        <text>L-glutaminyl-[peptide chain release factor] + S-adenosyl-L-methionine = N(5)-methyl-L-glutaminyl-[peptide chain release factor] + S-adenosyl-L-homocysteine + H(+)</text>
        <dbReference type="Rhea" id="RHEA:42896"/>
        <dbReference type="Rhea" id="RHEA-COMP:10271"/>
        <dbReference type="Rhea" id="RHEA-COMP:10272"/>
        <dbReference type="ChEBI" id="CHEBI:15378"/>
        <dbReference type="ChEBI" id="CHEBI:30011"/>
        <dbReference type="ChEBI" id="CHEBI:57856"/>
        <dbReference type="ChEBI" id="CHEBI:59789"/>
        <dbReference type="ChEBI" id="CHEBI:61891"/>
        <dbReference type="EC" id="2.1.1.297"/>
    </reaction>
</comment>
<comment type="similarity">
    <text evidence="1">Belongs to the protein N5-glutamine methyltransferase family. PrmC subfamily.</text>
</comment>
<protein>
    <recommendedName>
        <fullName evidence="1">Release factor glutamine methyltransferase</fullName>
        <shortName evidence="1">RF MTase</shortName>
        <ecNumber evidence="1">2.1.1.297</ecNumber>
    </recommendedName>
    <alternativeName>
        <fullName evidence="1">N5-glutamine methyltransferase PrmC</fullName>
    </alternativeName>
    <alternativeName>
        <fullName evidence="1">Protein-(glutamine-N5) MTase PrmC</fullName>
    </alternativeName>
    <alternativeName>
        <fullName evidence="1">Protein-glutamine N-methyltransferase PrmC</fullName>
    </alternativeName>
</protein>
<reference key="1">
    <citation type="journal article" date="2002" name="Proc. Natl. Acad. Sci. U.S.A.">
        <title>The complete genome sequence of Chlorobium tepidum TLS, a photosynthetic, anaerobic, green-sulfur bacterium.</title>
        <authorList>
            <person name="Eisen J.A."/>
            <person name="Nelson K.E."/>
            <person name="Paulsen I.T."/>
            <person name="Heidelberg J.F."/>
            <person name="Wu M."/>
            <person name="Dodson R.J."/>
            <person name="DeBoy R.T."/>
            <person name="Gwinn M.L."/>
            <person name="Nelson W.C."/>
            <person name="Haft D.H."/>
            <person name="Hickey E.K."/>
            <person name="Peterson J.D."/>
            <person name="Durkin A.S."/>
            <person name="Kolonay J.F."/>
            <person name="Yang F."/>
            <person name="Holt I.E."/>
            <person name="Umayam L.A."/>
            <person name="Mason T.M."/>
            <person name="Brenner M."/>
            <person name="Shea T.P."/>
            <person name="Parksey D.S."/>
            <person name="Nierman W.C."/>
            <person name="Feldblyum T.V."/>
            <person name="Hansen C.L."/>
            <person name="Craven M.B."/>
            <person name="Radune D."/>
            <person name="Vamathevan J.J."/>
            <person name="Khouri H.M."/>
            <person name="White O."/>
            <person name="Gruber T.M."/>
            <person name="Ketchum K.A."/>
            <person name="Venter J.C."/>
            <person name="Tettelin H."/>
            <person name="Bryant D.A."/>
            <person name="Fraser C.M."/>
        </authorList>
    </citation>
    <scope>NUCLEOTIDE SEQUENCE [LARGE SCALE GENOMIC DNA]</scope>
    <source>
        <strain>ATCC 49652 / DSM 12025 / NBRC 103806 / TLS</strain>
    </source>
</reference>
<gene>
    <name evidence="1" type="primary">prmC</name>
    <name type="synonym">hemK</name>
    <name type="ordered locus">CT1487</name>
</gene>
<keyword id="KW-0489">Methyltransferase</keyword>
<keyword id="KW-1185">Reference proteome</keyword>
<keyword id="KW-0949">S-adenosyl-L-methionine</keyword>
<keyword id="KW-0808">Transferase</keyword>
<accession>Q8KCD5</accession>
<dbReference type="EC" id="2.1.1.297" evidence="1"/>
<dbReference type="EMBL" id="AE006470">
    <property type="protein sequence ID" value="AAM72714.1"/>
    <property type="molecule type" value="Genomic_DNA"/>
</dbReference>
<dbReference type="RefSeq" id="NP_662372.1">
    <property type="nucleotide sequence ID" value="NC_002932.3"/>
</dbReference>
<dbReference type="RefSeq" id="WP_010933153.1">
    <property type="nucleotide sequence ID" value="NC_002932.3"/>
</dbReference>
<dbReference type="SMR" id="Q8KCD5"/>
<dbReference type="STRING" id="194439.CT1487"/>
<dbReference type="EnsemblBacteria" id="AAM72714">
    <property type="protein sequence ID" value="AAM72714"/>
    <property type="gene ID" value="CT1487"/>
</dbReference>
<dbReference type="KEGG" id="cte:CT1487"/>
<dbReference type="PATRIC" id="fig|194439.7.peg.1349"/>
<dbReference type="eggNOG" id="COG2890">
    <property type="taxonomic scope" value="Bacteria"/>
</dbReference>
<dbReference type="HOGENOM" id="CLU_018398_3_1_10"/>
<dbReference type="OrthoDB" id="9800643at2"/>
<dbReference type="Proteomes" id="UP000001007">
    <property type="component" value="Chromosome"/>
</dbReference>
<dbReference type="GO" id="GO:0003676">
    <property type="term" value="F:nucleic acid binding"/>
    <property type="evidence" value="ECO:0007669"/>
    <property type="project" value="InterPro"/>
</dbReference>
<dbReference type="GO" id="GO:0102559">
    <property type="term" value="F:protein-(glutamine-N5) methyltransferase activity"/>
    <property type="evidence" value="ECO:0007669"/>
    <property type="project" value="UniProtKB-EC"/>
</dbReference>
<dbReference type="GO" id="GO:0036009">
    <property type="term" value="F:protein-glutamine N-methyltransferase activity"/>
    <property type="evidence" value="ECO:0007669"/>
    <property type="project" value="UniProtKB-UniRule"/>
</dbReference>
<dbReference type="GO" id="GO:0032259">
    <property type="term" value="P:methylation"/>
    <property type="evidence" value="ECO:0007669"/>
    <property type="project" value="UniProtKB-KW"/>
</dbReference>
<dbReference type="CDD" id="cd02440">
    <property type="entry name" value="AdoMet_MTases"/>
    <property type="match status" value="1"/>
</dbReference>
<dbReference type="Gene3D" id="1.10.8.10">
    <property type="entry name" value="DNA helicase RuvA subunit, C-terminal domain"/>
    <property type="match status" value="1"/>
</dbReference>
<dbReference type="Gene3D" id="3.40.50.150">
    <property type="entry name" value="Vaccinia Virus protein VP39"/>
    <property type="match status" value="1"/>
</dbReference>
<dbReference type="HAMAP" id="MF_02126">
    <property type="entry name" value="RF_methyltr_PrmC"/>
    <property type="match status" value="1"/>
</dbReference>
<dbReference type="InterPro" id="IPR002052">
    <property type="entry name" value="DNA_methylase_N6_adenine_CS"/>
</dbReference>
<dbReference type="InterPro" id="IPR004556">
    <property type="entry name" value="HemK-like"/>
</dbReference>
<dbReference type="InterPro" id="IPR050320">
    <property type="entry name" value="N5-glutamine_MTase"/>
</dbReference>
<dbReference type="InterPro" id="IPR040758">
    <property type="entry name" value="PrmC_N"/>
</dbReference>
<dbReference type="InterPro" id="IPR019874">
    <property type="entry name" value="RF_methyltr_PrmC"/>
</dbReference>
<dbReference type="InterPro" id="IPR029063">
    <property type="entry name" value="SAM-dependent_MTases_sf"/>
</dbReference>
<dbReference type="InterPro" id="IPR007848">
    <property type="entry name" value="Small_mtfrase_dom"/>
</dbReference>
<dbReference type="NCBIfam" id="TIGR00536">
    <property type="entry name" value="hemK_fam"/>
    <property type="match status" value="1"/>
</dbReference>
<dbReference type="NCBIfam" id="TIGR03534">
    <property type="entry name" value="RF_mod_PrmC"/>
    <property type="match status" value="1"/>
</dbReference>
<dbReference type="PANTHER" id="PTHR18895">
    <property type="entry name" value="HEMK METHYLTRANSFERASE"/>
    <property type="match status" value="1"/>
</dbReference>
<dbReference type="PANTHER" id="PTHR18895:SF74">
    <property type="entry name" value="MTRF1L RELEASE FACTOR GLUTAMINE METHYLTRANSFERASE"/>
    <property type="match status" value="1"/>
</dbReference>
<dbReference type="Pfam" id="PF05175">
    <property type="entry name" value="MTS"/>
    <property type="match status" value="1"/>
</dbReference>
<dbReference type="Pfam" id="PF17827">
    <property type="entry name" value="PrmC_N"/>
    <property type="match status" value="1"/>
</dbReference>
<dbReference type="SUPFAM" id="SSF53335">
    <property type="entry name" value="S-adenosyl-L-methionine-dependent methyltransferases"/>
    <property type="match status" value="1"/>
</dbReference>
<organism>
    <name type="scientific">Chlorobaculum tepidum (strain ATCC 49652 / DSM 12025 / NBRC 103806 / TLS)</name>
    <name type="common">Chlorobium tepidum</name>
    <dbReference type="NCBI Taxonomy" id="194439"/>
    <lineage>
        <taxon>Bacteria</taxon>
        <taxon>Pseudomonadati</taxon>
        <taxon>Chlorobiota</taxon>
        <taxon>Chlorobiia</taxon>
        <taxon>Chlorobiales</taxon>
        <taxon>Chlorobiaceae</taxon>
        <taxon>Chlorobaculum</taxon>
    </lineage>
</organism>
<proteinExistence type="inferred from homology"/>
<sequence length="294" mass="32308">MPEEKVWSVVELLKTTIAFFAEKKIDEPRLSAELLLGHVLGLQRLQLYLDHERPLTLKELEAFRAACRERLQGRPVQYIAGEAFFYGYQFFVDERVLIPRPETELVLEHAMERLAASGLDSADSPSILDVGTGSGCIAITLALRLPGARVTAADVSADALDVARRNADAHGVSERIRFVEADALSASFADAVGGPFDLLVSNPPYIPEAEWATLQEEVRRYEPRLALVAPTGFEYYQSIAVAAPSLLRKGGVLCFELHADGAAEVRNLLGSSFADVQVMQDYNKLDRGLSCMAQ</sequence>